<accession>A5FLS1</accession>
<name>ATPB_FLAJ1</name>
<evidence type="ECO:0000255" key="1">
    <source>
        <dbReference type="HAMAP-Rule" id="MF_01347"/>
    </source>
</evidence>
<keyword id="KW-0066">ATP synthesis</keyword>
<keyword id="KW-0067">ATP-binding</keyword>
<keyword id="KW-0997">Cell inner membrane</keyword>
<keyword id="KW-1003">Cell membrane</keyword>
<keyword id="KW-0139">CF(1)</keyword>
<keyword id="KW-0375">Hydrogen ion transport</keyword>
<keyword id="KW-0406">Ion transport</keyword>
<keyword id="KW-0472">Membrane</keyword>
<keyword id="KW-0547">Nucleotide-binding</keyword>
<keyword id="KW-1278">Translocase</keyword>
<keyword id="KW-0813">Transport</keyword>
<proteinExistence type="inferred from homology"/>
<sequence length="503" mass="54269">MSKVIGKVAQIIGPVVDVVFNGKDVELPKIYDSLEVTKKDGTLLVLEVQSHIGENTVRTISMDSTDGLSRGYEVVGTGNPIQMPIGPDVYGRLFNVVGDAIDGLGNLPKTGENGLPIHRQAPKFEDLSTSSEVLFTGIKVIDLIEPYAKGGKIGLFGGAGVGKTVLIQELINNIAKGHGGLSVFAGVGERTREGNDLLREMLESGIIKYGDDFMHSMENGGWDLSKVDMPGMRESKATFVFGQMNEPPGARARVALSGLSIAEYFRDGAGSDQGKDVLFFVDNIFRFTQAGSEVSALLGRMPSAVGYQPTLATEMGAMQERITSTNKGSITSVQAVYVPADDLTDPAPATTFAHLDATTVLSRKIAELGIYPAVDPLDSTSRILTPHILGDEHYNCAQRVKEILQKYKQLQDIIAILGMEELSEEDKLSVSRARRVQRFLSQPFHVAEQFTGIPGVLVDIKDTIKGFNMIIDGELDHLPEAAFNLKGSIQDAIEAGEKMLAEA</sequence>
<gene>
    <name evidence="1" type="primary">atpD</name>
    <name type="ordered locus">Fjoh_0819</name>
</gene>
<dbReference type="EC" id="7.1.2.2" evidence="1"/>
<dbReference type="EMBL" id="CP000685">
    <property type="protein sequence ID" value="ABQ03853.1"/>
    <property type="molecule type" value="Genomic_DNA"/>
</dbReference>
<dbReference type="RefSeq" id="WP_012022907.1">
    <property type="nucleotide sequence ID" value="NZ_MUGZ01000025.1"/>
</dbReference>
<dbReference type="SMR" id="A5FLS1"/>
<dbReference type="STRING" id="376686.Fjoh_0819"/>
<dbReference type="KEGG" id="fjo:Fjoh_0819"/>
<dbReference type="eggNOG" id="COG0055">
    <property type="taxonomic scope" value="Bacteria"/>
</dbReference>
<dbReference type="HOGENOM" id="CLU_022398_0_2_10"/>
<dbReference type="OrthoDB" id="9801639at2"/>
<dbReference type="Proteomes" id="UP000006694">
    <property type="component" value="Chromosome"/>
</dbReference>
<dbReference type="GO" id="GO:0005886">
    <property type="term" value="C:plasma membrane"/>
    <property type="evidence" value="ECO:0007669"/>
    <property type="project" value="UniProtKB-SubCell"/>
</dbReference>
<dbReference type="GO" id="GO:0045259">
    <property type="term" value="C:proton-transporting ATP synthase complex"/>
    <property type="evidence" value="ECO:0007669"/>
    <property type="project" value="UniProtKB-KW"/>
</dbReference>
<dbReference type="GO" id="GO:0005524">
    <property type="term" value="F:ATP binding"/>
    <property type="evidence" value="ECO:0007669"/>
    <property type="project" value="UniProtKB-UniRule"/>
</dbReference>
<dbReference type="GO" id="GO:0016887">
    <property type="term" value="F:ATP hydrolysis activity"/>
    <property type="evidence" value="ECO:0007669"/>
    <property type="project" value="InterPro"/>
</dbReference>
<dbReference type="GO" id="GO:0046933">
    <property type="term" value="F:proton-transporting ATP synthase activity, rotational mechanism"/>
    <property type="evidence" value="ECO:0007669"/>
    <property type="project" value="UniProtKB-UniRule"/>
</dbReference>
<dbReference type="CDD" id="cd18110">
    <property type="entry name" value="ATP-synt_F1_beta_C"/>
    <property type="match status" value="1"/>
</dbReference>
<dbReference type="CDD" id="cd18115">
    <property type="entry name" value="ATP-synt_F1_beta_N"/>
    <property type="match status" value="1"/>
</dbReference>
<dbReference type="CDD" id="cd01133">
    <property type="entry name" value="F1-ATPase_beta_CD"/>
    <property type="match status" value="1"/>
</dbReference>
<dbReference type="FunFam" id="1.10.1140.10:FF:000001">
    <property type="entry name" value="ATP synthase subunit beta"/>
    <property type="match status" value="1"/>
</dbReference>
<dbReference type="FunFam" id="3.40.50.300:FF:000004">
    <property type="entry name" value="ATP synthase subunit beta"/>
    <property type="match status" value="1"/>
</dbReference>
<dbReference type="Gene3D" id="2.40.10.170">
    <property type="match status" value="1"/>
</dbReference>
<dbReference type="Gene3D" id="1.10.1140.10">
    <property type="entry name" value="Bovine Mitochondrial F1-atpase, Atp Synthase Beta Chain, Chain D, domain 3"/>
    <property type="match status" value="1"/>
</dbReference>
<dbReference type="Gene3D" id="3.40.50.300">
    <property type="entry name" value="P-loop containing nucleotide triphosphate hydrolases"/>
    <property type="match status" value="1"/>
</dbReference>
<dbReference type="HAMAP" id="MF_01347">
    <property type="entry name" value="ATP_synth_beta_bact"/>
    <property type="match status" value="1"/>
</dbReference>
<dbReference type="InterPro" id="IPR003593">
    <property type="entry name" value="AAA+_ATPase"/>
</dbReference>
<dbReference type="InterPro" id="IPR055190">
    <property type="entry name" value="ATP-synt_VA_C"/>
</dbReference>
<dbReference type="InterPro" id="IPR005722">
    <property type="entry name" value="ATP_synth_F1_bsu"/>
</dbReference>
<dbReference type="InterPro" id="IPR020003">
    <property type="entry name" value="ATPase_a/bsu_AS"/>
</dbReference>
<dbReference type="InterPro" id="IPR050053">
    <property type="entry name" value="ATPase_alpha/beta_chains"/>
</dbReference>
<dbReference type="InterPro" id="IPR004100">
    <property type="entry name" value="ATPase_F1/V1/A1_a/bsu_N"/>
</dbReference>
<dbReference type="InterPro" id="IPR036121">
    <property type="entry name" value="ATPase_F1/V1/A1_a/bsu_N_sf"/>
</dbReference>
<dbReference type="InterPro" id="IPR000194">
    <property type="entry name" value="ATPase_F1/V1/A1_a/bsu_nucl-bd"/>
</dbReference>
<dbReference type="InterPro" id="IPR024034">
    <property type="entry name" value="ATPase_F1/V1_b/a_C"/>
</dbReference>
<dbReference type="InterPro" id="IPR027417">
    <property type="entry name" value="P-loop_NTPase"/>
</dbReference>
<dbReference type="NCBIfam" id="TIGR01039">
    <property type="entry name" value="atpD"/>
    <property type="match status" value="1"/>
</dbReference>
<dbReference type="PANTHER" id="PTHR15184">
    <property type="entry name" value="ATP SYNTHASE"/>
    <property type="match status" value="1"/>
</dbReference>
<dbReference type="PANTHER" id="PTHR15184:SF71">
    <property type="entry name" value="ATP SYNTHASE SUBUNIT BETA, MITOCHONDRIAL"/>
    <property type="match status" value="1"/>
</dbReference>
<dbReference type="Pfam" id="PF00006">
    <property type="entry name" value="ATP-synt_ab"/>
    <property type="match status" value="1"/>
</dbReference>
<dbReference type="Pfam" id="PF02874">
    <property type="entry name" value="ATP-synt_ab_N"/>
    <property type="match status" value="1"/>
</dbReference>
<dbReference type="Pfam" id="PF22919">
    <property type="entry name" value="ATP-synt_VA_C"/>
    <property type="match status" value="1"/>
</dbReference>
<dbReference type="SMART" id="SM00382">
    <property type="entry name" value="AAA"/>
    <property type="match status" value="1"/>
</dbReference>
<dbReference type="SUPFAM" id="SSF47917">
    <property type="entry name" value="C-terminal domain of alpha and beta subunits of F1 ATP synthase"/>
    <property type="match status" value="1"/>
</dbReference>
<dbReference type="SUPFAM" id="SSF50615">
    <property type="entry name" value="N-terminal domain of alpha and beta subunits of F1 ATP synthase"/>
    <property type="match status" value="1"/>
</dbReference>
<dbReference type="SUPFAM" id="SSF52540">
    <property type="entry name" value="P-loop containing nucleoside triphosphate hydrolases"/>
    <property type="match status" value="1"/>
</dbReference>
<dbReference type="PROSITE" id="PS00152">
    <property type="entry name" value="ATPASE_ALPHA_BETA"/>
    <property type="match status" value="1"/>
</dbReference>
<feature type="chain" id="PRO_1000086911" description="ATP synthase subunit beta">
    <location>
        <begin position="1"/>
        <end position="503"/>
    </location>
</feature>
<feature type="binding site" evidence="1">
    <location>
        <begin position="157"/>
        <end position="164"/>
    </location>
    <ligand>
        <name>ATP</name>
        <dbReference type="ChEBI" id="CHEBI:30616"/>
    </ligand>
</feature>
<organism>
    <name type="scientific">Flavobacterium johnsoniae (strain ATCC 17061 / DSM 2064 / JCM 8514 / BCRC 14874 / CCUG 350202 / NBRC 14942 / NCIMB 11054 / UW101)</name>
    <name type="common">Cytophaga johnsonae</name>
    <dbReference type="NCBI Taxonomy" id="376686"/>
    <lineage>
        <taxon>Bacteria</taxon>
        <taxon>Pseudomonadati</taxon>
        <taxon>Bacteroidota</taxon>
        <taxon>Flavobacteriia</taxon>
        <taxon>Flavobacteriales</taxon>
        <taxon>Flavobacteriaceae</taxon>
        <taxon>Flavobacterium</taxon>
    </lineage>
</organism>
<reference key="1">
    <citation type="journal article" date="2009" name="Appl. Environ. Microbiol.">
        <title>Novel features of the polysaccharide-digesting gliding bacterium Flavobacterium johnsoniae as revealed by genome sequence analysis.</title>
        <authorList>
            <person name="McBride M.J."/>
            <person name="Xie G."/>
            <person name="Martens E.C."/>
            <person name="Lapidus A."/>
            <person name="Henrissat B."/>
            <person name="Rhodes R.G."/>
            <person name="Goltsman E."/>
            <person name="Wang W."/>
            <person name="Xu J."/>
            <person name="Hunnicutt D.W."/>
            <person name="Staroscik A.M."/>
            <person name="Hoover T.R."/>
            <person name="Cheng Y.Q."/>
            <person name="Stein J.L."/>
        </authorList>
    </citation>
    <scope>NUCLEOTIDE SEQUENCE [LARGE SCALE GENOMIC DNA]</scope>
    <source>
        <strain>ATCC 17061 / DSM 2064 / JCM 8514 / BCRC 14874 / CCUG 350202 / NBRC 14942 / NCIMB 11054 / UW101</strain>
    </source>
</reference>
<comment type="function">
    <text evidence="1">Produces ATP from ADP in the presence of a proton gradient across the membrane. The catalytic sites are hosted primarily by the beta subunits.</text>
</comment>
<comment type="catalytic activity">
    <reaction evidence="1">
        <text>ATP + H2O + 4 H(+)(in) = ADP + phosphate + 5 H(+)(out)</text>
        <dbReference type="Rhea" id="RHEA:57720"/>
        <dbReference type="ChEBI" id="CHEBI:15377"/>
        <dbReference type="ChEBI" id="CHEBI:15378"/>
        <dbReference type="ChEBI" id="CHEBI:30616"/>
        <dbReference type="ChEBI" id="CHEBI:43474"/>
        <dbReference type="ChEBI" id="CHEBI:456216"/>
        <dbReference type="EC" id="7.1.2.2"/>
    </reaction>
</comment>
<comment type="subunit">
    <text evidence="1">F-type ATPases have 2 components, CF(1) - the catalytic core - and CF(0) - the membrane proton channel. CF(1) has five subunits: alpha(3), beta(3), gamma(1), delta(1), epsilon(1). CF(0) has three main subunits: a(1), b(2) and c(9-12). The alpha and beta chains form an alternating ring which encloses part of the gamma chain. CF(1) is attached to CF(0) by a central stalk formed by the gamma and epsilon chains, while a peripheral stalk is formed by the delta and b chains.</text>
</comment>
<comment type="subcellular location">
    <subcellularLocation>
        <location evidence="1">Cell inner membrane</location>
        <topology evidence="1">Peripheral membrane protein</topology>
    </subcellularLocation>
</comment>
<comment type="similarity">
    <text evidence="1">Belongs to the ATPase alpha/beta chains family.</text>
</comment>
<protein>
    <recommendedName>
        <fullName evidence="1">ATP synthase subunit beta</fullName>
        <ecNumber evidence="1">7.1.2.2</ecNumber>
    </recommendedName>
    <alternativeName>
        <fullName evidence="1">ATP synthase F1 sector subunit beta</fullName>
    </alternativeName>
    <alternativeName>
        <fullName evidence="1">F-ATPase subunit beta</fullName>
    </alternativeName>
</protein>